<accession>B8FP05</accession>
<name>PUR9_DESHD</name>
<dbReference type="EC" id="2.1.2.3" evidence="1"/>
<dbReference type="EC" id="3.5.4.10" evidence="1"/>
<dbReference type="EMBL" id="CP001336">
    <property type="protein sequence ID" value="ACL19530.1"/>
    <property type="molecule type" value="Genomic_DNA"/>
</dbReference>
<dbReference type="RefSeq" id="WP_005817232.1">
    <property type="nucleotide sequence ID" value="NC_011830.1"/>
</dbReference>
<dbReference type="SMR" id="B8FP05"/>
<dbReference type="KEGG" id="dhd:Dhaf_1478"/>
<dbReference type="HOGENOM" id="CLU_016316_5_2_9"/>
<dbReference type="UniPathway" id="UPA00074">
    <property type="reaction ID" value="UER00133"/>
</dbReference>
<dbReference type="UniPathway" id="UPA00074">
    <property type="reaction ID" value="UER00135"/>
</dbReference>
<dbReference type="Proteomes" id="UP000007726">
    <property type="component" value="Chromosome"/>
</dbReference>
<dbReference type="GO" id="GO:0005829">
    <property type="term" value="C:cytosol"/>
    <property type="evidence" value="ECO:0007669"/>
    <property type="project" value="TreeGrafter"/>
</dbReference>
<dbReference type="GO" id="GO:0003937">
    <property type="term" value="F:IMP cyclohydrolase activity"/>
    <property type="evidence" value="ECO:0007669"/>
    <property type="project" value="UniProtKB-UniRule"/>
</dbReference>
<dbReference type="GO" id="GO:0004643">
    <property type="term" value="F:phosphoribosylaminoimidazolecarboxamide formyltransferase activity"/>
    <property type="evidence" value="ECO:0007669"/>
    <property type="project" value="UniProtKB-UniRule"/>
</dbReference>
<dbReference type="GO" id="GO:0006189">
    <property type="term" value="P:'de novo' IMP biosynthetic process"/>
    <property type="evidence" value="ECO:0007669"/>
    <property type="project" value="UniProtKB-UniRule"/>
</dbReference>
<dbReference type="CDD" id="cd01421">
    <property type="entry name" value="IMPCH"/>
    <property type="match status" value="1"/>
</dbReference>
<dbReference type="FunFam" id="3.40.140.20:FF:000001">
    <property type="entry name" value="Bifunctional purine biosynthesis protein PurH"/>
    <property type="match status" value="1"/>
</dbReference>
<dbReference type="FunFam" id="3.40.140.20:FF:000002">
    <property type="entry name" value="Bifunctional purine biosynthesis protein PurH"/>
    <property type="match status" value="1"/>
</dbReference>
<dbReference type="FunFam" id="3.40.50.1380:FF:000001">
    <property type="entry name" value="Bifunctional purine biosynthesis protein PurH"/>
    <property type="match status" value="1"/>
</dbReference>
<dbReference type="Gene3D" id="3.40.140.20">
    <property type="match status" value="2"/>
</dbReference>
<dbReference type="Gene3D" id="3.40.50.1380">
    <property type="entry name" value="Methylglyoxal synthase-like domain"/>
    <property type="match status" value="1"/>
</dbReference>
<dbReference type="HAMAP" id="MF_00139">
    <property type="entry name" value="PurH"/>
    <property type="match status" value="1"/>
</dbReference>
<dbReference type="InterPro" id="IPR024051">
    <property type="entry name" value="AICAR_Tfase_dup_dom_sf"/>
</dbReference>
<dbReference type="InterPro" id="IPR016193">
    <property type="entry name" value="Cytidine_deaminase-like"/>
</dbReference>
<dbReference type="InterPro" id="IPR011607">
    <property type="entry name" value="MGS-like_dom"/>
</dbReference>
<dbReference type="InterPro" id="IPR036914">
    <property type="entry name" value="MGS-like_dom_sf"/>
</dbReference>
<dbReference type="InterPro" id="IPR002695">
    <property type="entry name" value="PurH-like"/>
</dbReference>
<dbReference type="NCBIfam" id="NF002049">
    <property type="entry name" value="PRK00881.1"/>
    <property type="match status" value="1"/>
</dbReference>
<dbReference type="NCBIfam" id="TIGR00355">
    <property type="entry name" value="purH"/>
    <property type="match status" value="1"/>
</dbReference>
<dbReference type="PANTHER" id="PTHR11692:SF0">
    <property type="entry name" value="BIFUNCTIONAL PURINE BIOSYNTHESIS PROTEIN ATIC"/>
    <property type="match status" value="1"/>
</dbReference>
<dbReference type="PANTHER" id="PTHR11692">
    <property type="entry name" value="BIFUNCTIONAL PURINE BIOSYNTHESIS PROTEIN PURH"/>
    <property type="match status" value="1"/>
</dbReference>
<dbReference type="Pfam" id="PF01808">
    <property type="entry name" value="AICARFT_IMPCHas"/>
    <property type="match status" value="1"/>
</dbReference>
<dbReference type="Pfam" id="PF02142">
    <property type="entry name" value="MGS"/>
    <property type="match status" value="1"/>
</dbReference>
<dbReference type="PIRSF" id="PIRSF000414">
    <property type="entry name" value="AICARFT_IMPCHas"/>
    <property type="match status" value="1"/>
</dbReference>
<dbReference type="SMART" id="SM00798">
    <property type="entry name" value="AICARFT_IMPCHas"/>
    <property type="match status" value="1"/>
</dbReference>
<dbReference type="SMART" id="SM00851">
    <property type="entry name" value="MGS"/>
    <property type="match status" value="1"/>
</dbReference>
<dbReference type="SUPFAM" id="SSF53927">
    <property type="entry name" value="Cytidine deaminase-like"/>
    <property type="match status" value="1"/>
</dbReference>
<dbReference type="SUPFAM" id="SSF52335">
    <property type="entry name" value="Methylglyoxal synthase-like"/>
    <property type="match status" value="1"/>
</dbReference>
<dbReference type="PROSITE" id="PS51855">
    <property type="entry name" value="MGS"/>
    <property type="match status" value="1"/>
</dbReference>
<keyword id="KW-0378">Hydrolase</keyword>
<keyword id="KW-0511">Multifunctional enzyme</keyword>
<keyword id="KW-0658">Purine biosynthesis</keyword>
<keyword id="KW-0808">Transferase</keyword>
<feature type="chain" id="PRO_1000122957" description="Bifunctional purine biosynthesis protein PurH">
    <location>
        <begin position="1"/>
        <end position="518"/>
    </location>
</feature>
<feature type="domain" description="MGS-like" evidence="2">
    <location>
        <begin position="1"/>
        <end position="144"/>
    </location>
</feature>
<sequence>MNRRAVLSVSNKTGLVELARGLVELGFDLISTGGTFKTLTEAGLPVRYVTEVTGFPEILDGRVKTLHPRIHGGILARATAEHLQQLEDNGIGLIDLVVVNLYPFKETIARPGVSFQEAIENIDIGGPSMVRAAAKNQERVSIVVNPERYPEVLQALREQGEISYDMRKRLAAEAFAHTAEYDQCIAGYLTAALAEESVSSSSSPFPATITLGGQKAQDLRYGENPAQKAAFYRGADAAGTLAYGEQIQGKELSYNNWMDMDAAWGIVQDFSEPACAIIKHTNPCGTALGKTALEAYEKALAADPVSAFGGIIAFNRTVDAECAASLKAHFYEVIVAHEFSSDARAILQEKKNLRLVKVAQDGKPAHTPWKVRSIQGGFLIQEEDEGTTPISAWEVVSKRQPEPEELRELDFAWRVVKHVKSNAIVLAKAGQTLGVGAGQMNRVGSVKIALEQAGDKAQGAYLASDAFFPFPDSLEEAAKAGVRAVVQPGGSVRDAEVIEAADRLNLIMVFTNRRHFKH</sequence>
<gene>
    <name evidence="1" type="primary">purH</name>
    <name type="ordered locus">Dhaf_1478</name>
</gene>
<evidence type="ECO:0000255" key="1">
    <source>
        <dbReference type="HAMAP-Rule" id="MF_00139"/>
    </source>
</evidence>
<evidence type="ECO:0000255" key="2">
    <source>
        <dbReference type="PROSITE-ProRule" id="PRU01202"/>
    </source>
</evidence>
<comment type="catalytic activity">
    <reaction evidence="1">
        <text>(6R)-10-formyltetrahydrofolate + 5-amino-1-(5-phospho-beta-D-ribosyl)imidazole-4-carboxamide = 5-formamido-1-(5-phospho-D-ribosyl)imidazole-4-carboxamide + (6S)-5,6,7,8-tetrahydrofolate</text>
        <dbReference type="Rhea" id="RHEA:22192"/>
        <dbReference type="ChEBI" id="CHEBI:57453"/>
        <dbReference type="ChEBI" id="CHEBI:58467"/>
        <dbReference type="ChEBI" id="CHEBI:58475"/>
        <dbReference type="ChEBI" id="CHEBI:195366"/>
        <dbReference type="EC" id="2.1.2.3"/>
    </reaction>
</comment>
<comment type="catalytic activity">
    <reaction evidence="1">
        <text>IMP + H2O = 5-formamido-1-(5-phospho-D-ribosyl)imidazole-4-carboxamide</text>
        <dbReference type="Rhea" id="RHEA:18445"/>
        <dbReference type="ChEBI" id="CHEBI:15377"/>
        <dbReference type="ChEBI" id="CHEBI:58053"/>
        <dbReference type="ChEBI" id="CHEBI:58467"/>
        <dbReference type="EC" id="3.5.4.10"/>
    </reaction>
</comment>
<comment type="pathway">
    <text evidence="1">Purine metabolism; IMP biosynthesis via de novo pathway; 5-formamido-1-(5-phospho-D-ribosyl)imidazole-4-carboxamide from 5-amino-1-(5-phospho-D-ribosyl)imidazole-4-carboxamide (10-formyl THF route): step 1/1.</text>
</comment>
<comment type="pathway">
    <text evidence="1">Purine metabolism; IMP biosynthesis via de novo pathway; IMP from 5-formamido-1-(5-phospho-D-ribosyl)imidazole-4-carboxamide: step 1/1.</text>
</comment>
<comment type="domain">
    <text evidence="1">The IMP cyclohydrolase activity resides in the N-terminal region.</text>
</comment>
<comment type="similarity">
    <text evidence="1">Belongs to the PurH family.</text>
</comment>
<proteinExistence type="inferred from homology"/>
<reference key="1">
    <citation type="journal article" date="2012" name="BMC Microbiol.">
        <title>Genome sequence of Desulfitobacterium hafniense DCB-2, a Gram-positive anaerobe capable of dehalogenation and metal reduction.</title>
        <authorList>
            <person name="Kim S.H."/>
            <person name="Harzman C."/>
            <person name="Davis J.K."/>
            <person name="Hutcheson R."/>
            <person name="Broderick J.B."/>
            <person name="Marsh T.L."/>
            <person name="Tiedje J.M."/>
        </authorList>
    </citation>
    <scope>NUCLEOTIDE SEQUENCE [LARGE SCALE GENOMIC DNA]</scope>
    <source>
        <strain>DSM 10664 / DCB-2</strain>
    </source>
</reference>
<protein>
    <recommendedName>
        <fullName evidence="1">Bifunctional purine biosynthesis protein PurH</fullName>
    </recommendedName>
    <domain>
        <recommendedName>
            <fullName evidence="1">Phosphoribosylaminoimidazolecarboxamide formyltransferase</fullName>
            <ecNumber evidence="1">2.1.2.3</ecNumber>
        </recommendedName>
        <alternativeName>
            <fullName evidence="1">AICAR transformylase</fullName>
        </alternativeName>
    </domain>
    <domain>
        <recommendedName>
            <fullName evidence="1">IMP cyclohydrolase</fullName>
            <ecNumber evidence="1">3.5.4.10</ecNumber>
        </recommendedName>
        <alternativeName>
            <fullName evidence="1">ATIC</fullName>
        </alternativeName>
        <alternativeName>
            <fullName evidence="1">IMP synthase</fullName>
        </alternativeName>
        <alternativeName>
            <fullName evidence="1">Inosinicase</fullName>
        </alternativeName>
    </domain>
</protein>
<organism>
    <name type="scientific">Desulfitobacterium hafniense (strain DSM 10664 / DCB-2)</name>
    <dbReference type="NCBI Taxonomy" id="272564"/>
    <lineage>
        <taxon>Bacteria</taxon>
        <taxon>Bacillati</taxon>
        <taxon>Bacillota</taxon>
        <taxon>Clostridia</taxon>
        <taxon>Eubacteriales</taxon>
        <taxon>Desulfitobacteriaceae</taxon>
        <taxon>Desulfitobacterium</taxon>
    </lineage>
</organism>